<dbReference type="EMBL" id="AB017508">
    <property type="protein sequence ID" value="BAA75284.1"/>
    <property type="molecule type" value="Genomic_DNA"/>
</dbReference>
<dbReference type="EMBL" id="BA000004">
    <property type="protein sequence ID" value="BAB03866.1"/>
    <property type="molecule type" value="Genomic_DNA"/>
</dbReference>
<dbReference type="PIR" id="T44396">
    <property type="entry name" value="T44396"/>
</dbReference>
<dbReference type="RefSeq" id="WP_010896330.1">
    <property type="nucleotide sequence ID" value="NC_002570.2"/>
</dbReference>
<dbReference type="SMR" id="Q9Z9K1"/>
<dbReference type="STRING" id="272558.gene:10725987"/>
<dbReference type="GeneID" id="87595688"/>
<dbReference type="KEGG" id="bha:BH0147"/>
<dbReference type="eggNOG" id="COG0199">
    <property type="taxonomic scope" value="Bacteria"/>
</dbReference>
<dbReference type="HOGENOM" id="CLU_139869_3_0_9"/>
<dbReference type="OrthoDB" id="9810484at2"/>
<dbReference type="Proteomes" id="UP000001258">
    <property type="component" value="Chromosome"/>
</dbReference>
<dbReference type="GO" id="GO:0015935">
    <property type="term" value="C:small ribosomal subunit"/>
    <property type="evidence" value="ECO:0007669"/>
    <property type="project" value="TreeGrafter"/>
</dbReference>
<dbReference type="GO" id="GO:0019843">
    <property type="term" value="F:rRNA binding"/>
    <property type="evidence" value="ECO:0007669"/>
    <property type="project" value="UniProtKB-UniRule"/>
</dbReference>
<dbReference type="GO" id="GO:0003735">
    <property type="term" value="F:structural constituent of ribosome"/>
    <property type="evidence" value="ECO:0007669"/>
    <property type="project" value="InterPro"/>
</dbReference>
<dbReference type="GO" id="GO:0008270">
    <property type="term" value="F:zinc ion binding"/>
    <property type="evidence" value="ECO:0007669"/>
    <property type="project" value="UniProtKB-UniRule"/>
</dbReference>
<dbReference type="GO" id="GO:0006412">
    <property type="term" value="P:translation"/>
    <property type="evidence" value="ECO:0007669"/>
    <property type="project" value="UniProtKB-UniRule"/>
</dbReference>
<dbReference type="FunFam" id="4.10.830.10:FF:000001">
    <property type="entry name" value="30S ribosomal protein S14 type Z"/>
    <property type="match status" value="1"/>
</dbReference>
<dbReference type="Gene3D" id="4.10.830.10">
    <property type="entry name" value="30s Ribosomal Protein S14, Chain N"/>
    <property type="match status" value="1"/>
</dbReference>
<dbReference type="HAMAP" id="MF_01364_B">
    <property type="entry name" value="Ribosomal_uS14_2_B"/>
    <property type="match status" value="1"/>
</dbReference>
<dbReference type="InterPro" id="IPR001209">
    <property type="entry name" value="Ribosomal_uS14"/>
</dbReference>
<dbReference type="InterPro" id="IPR023053">
    <property type="entry name" value="Ribosomal_uS14_bact"/>
</dbReference>
<dbReference type="InterPro" id="IPR018271">
    <property type="entry name" value="Ribosomal_uS14_CS"/>
</dbReference>
<dbReference type="InterPro" id="IPR043140">
    <property type="entry name" value="Ribosomal_uS14_sf"/>
</dbReference>
<dbReference type="NCBIfam" id="NF005974">
    <property type="entry name" value="PRK08061.1"/>
    <property type="match status" value="1"/>
</dbReference>
<dbReference type="PANTHER" id="PTHR19836">
    <property type="entry name" value="30S RIBOSOMAL PROTEIN S14"/>
    <property type="match status" value="1"/>
</dbReference>
<dbReference type="PANTHER" id="PTHR19836:SF26">
    <property type="entry name" value="SMALL RIBOSOMAL SUBUNIT PROTEIN US14B"/>
    <property type="match status" value="1"/>
</dbReference>
<dbReference type="Pfam" id="PF00253">
    <property type="entry name" value="Ribosomal_S14"/>
    <property type="match status" value="1"/>
</dbReference>
<dbReference type="SUPFAM" id="SSF57716">
    <property type="entry name" value="Glucocorticoid receptor-like (DNA-binding domain)"/>
    <property type="match status" value="1"/>
</dbReference>
<dbReference type="PROSITE" id="PS00527">
    <property type="entry name" value="RIBOSOMAL_S14"/>
    <property type="match status" value="1"/>
</dbReference>
<protein>
    <recommendedName>
        <fullName evidence="1">Small ribosomal subunit protein uS14</fullName>
    </recommendedName>
    <alternativeName>
        <fullName evidence="2">30S ribosomal protein S14 type Z</fullName>
    </alternativeName>
</protein>
<reference key="1">
    <citation type="journal article" date="1999" name="Biosci. Biotechnol. Biochem.">
        <title>Sequence analysis of a 32-kb region including the major ribosomal protein gene clusters from alkaliphilic Bacillus sp. strain C-125.</title>
        <authorList>
            <person name="Takami H."/>
            <person name="Takaki Y."/>
            <person name="Nakasone K."/>
            <person name="Hirama C."/>
            <person name="Inoue A."/>
            <person name="Horikoshi K."/>
        </authorList>
    </citation>
    <scope>NUCLEOTIDE SEQUENCE [GENOMIC DNA]</scope>
    <source>
        <strain>ATCC BAA-125 / DSM 18197 / FERM 7344 / JCM 9153 / C-125</strain>
    </source>
</reference>
<reference key="2">
    <citation type="journal article" date="2000" name="Nucleic Acids Res.">
        <title>Complete genome sequence of the alkaliphilic bacterium Bacillus halodurans and genomic sequence comparison with Bacillus subtilis.</title>
        <authorList>
            <person name="Takami H."/>
            <person name="Nakasone K."/>
            <person name="Takaki Y."/>
            <person name="Maeno G."/>
            <person name="Sasaki R."/>
            <person name="Masui N."/>
            <person name="Fuji F."/>
            <person name="Hirama C."/>
            <person name="Nakamura Y."/>
            <person name="Ogasawara N."/>
            <person name="Kuhara S."/>
            <person name="Horikoshi K."/>
        </authorList>
    </citation>
    <scope>NUCLEOTIDE SEQUENCE [LARGE SCALE GENOMIC DNA]</scope>
    <source>
        <strain>ATCC BAA-125 / DSM 18197 / FERM 7344 / JCM 9153 / C-125</strain>
    </source>
</reference>
<comment type="function">
    <text evidence="1">Binds 16S rRNA, required for the assembly of 30S particles and may also be responsible for determining the conformation of the 16S rRNA at the A site.</text>
</comment>
<comment type="cofactor">
    <cofactor evidence="1">
        <name>Zn(2+)</name>
        <dbReference type="ChEBI" id="CHEBI:29105"/>
    </cofactor>
    <text evidence="1">Binds 1 zinc ion per subunit.</text>
</comment>
<comment type="subunit">
    <text evidence="1">Part of the 30S ribosomal subunit. Contacts proteins S3 and S10.</text>
</comment>
<comment type="similarity">
    <text evidence="1">Belongs to the universal ribosomal protein uS14 family. Zinc-binding uS14 subfamily.</text>
</comment>
<proteinExistence type="inferred from homology"/>
<name>RS14Z_HALH5</name>
<feature type="chain" id="PRO_0000130870" description="Small ribosomal subunit protein uS14">
    <location>
        <begin position="1"/>
        <end position="61"/>
    </location>
</feature>
<feature type="binding site" evidence="1">
    <location>
        <position position="24"/>
    </location>
    <ligand>
        <name>Zn(2+)</name>
        <dbReference type="ChEBI" id="CHEBI:29105"/>
    </ligand>
</feature>
<feature type="binding site" evidence="1">
    <location>
        <position position="27"/>
    </location>
    <ligand>
        <name>Zn(2+)</name>
        <dbReference type="ChEBI" id="CHEBI:29105"/>
    </ligand>
</feature>
<feature type="binding site" evidence="1">
    <location>
        <position position="40"/>
    </location>
    <ligand>
        <name>Zn(2+)</name>
        <dbReference type="ChEBI" id="CHEBI:29105"/>
    </ligand>
</feature>
<feature type="binding site" evidence="1">
    <location>
        <position position="43"/>
    </location>
    <ligand>
        <name>Zn(2+)</name>
        <dbReference type="ChEBI" id="CHEBI:29105"/>
    </ligand>
</feature>
<evidence type="ECO:0000255" key="1">
    <source>
        <dbReference type="HAMAP-Rule" id="MF_01364"/>
    </source>
</evidence>
<evidence type="ECO:0000305" key="2"/>
<organism>
    <name type="scientific">Halalkalibacterium halodurans (strain ATCC BAA-125 / DSM 18197 / FERM 7344 / JCM 9153 / C-125)</name>
    <name type="common">Bacillus halodurans</name>
    <dbReference type="NCBI Taxonomy" id="272558"/>
    <lineage>
        <taxon>Bacteria</taxon>
        <taxon>Bacillati</taxon>
        <taxon>Bacillota</taxon>
        <taxon>Bacilli</taxon>
        <taxon>Bacillales</taxon>
        <taxon>Bacillaceae</taxon>
        <taxon>Halalkalibacterium (ex Joshi et al. 2022)</taxon>
    </lineage>
</organism>
<keyword id="KW-0479">Metal-binding</keyword>
<keyword id="KW-1185">Reference proteome</keyword>
<keyword id="KW-0687">Ribonucleoprotein</keyword>
<keyword id="KW-0689">Ribosomal protein</keyword>
<keyword id="KW-0694">RNA-binding</keyword>
<keyword id="KW-0699">rRNA-binding</keyword>
<keyword id="KW-0862">Zinc</keyword>
<accession>Q9Z9K1</accession>
<accession>Q9JPX4</accession>
<gene>
    <name evidence="1" type="primary">rpsZ</name>
    <name evidence="1" type="synonym">rpsN</name>
    <name type="ordered locus">BH0147</name>
</gene>
<sequence>MAKKSMIAKQKRTQKYKVREYTRCERCGRPHSVMRKFKLCRICFRELAYKGQIPGVKKASW</sequence>